<evidence type="ECO:0000250" key="1"/>
<evidence type="ECO:0000305" key="2"/>
<keyword id="KW-0119">Carbohydrate metabolism</keyword>
<keyword id="KW-0963">Cytoplasm</keyword>
<keyword id="KW-0456">Lyase</keyword>
<keyword id="KW-1185">Reference proteome</keyword>
<keyword id="KW-0704">Schiff base</keyword>
<comment type="function">
    <text evidence="1">Catalyzes the reversible formation of fructose 6-phosphate from dihydroxyacetone and D-glyceraldehyde 3-phosphate via an aldolization reaction.</text>
</comment>
<comment type="catalytic activity">
    <reaction>
        <text>beta-D-fructose 6-phosphate = dihydroxyacetone + D-glyceraldehyde 3-phosphate</text>
        <dbReference type="Rhea" id="RHEA:28002"/>
        <dbReference type="ChEBI" id="CHEBI:16016"/>
        <dbReference type="ChEBI" id="CHEBI:57634"/>
        <dbReference type="ChEBI" id="CHEBI:59776"/>
    </reaction>
</comment>
<comment type="subunit">
    <text evidence="1">Homodecamer.</text>
</comment>
<comment type="subcellular location">
    <subcellularLocation>
        <location evidence="1">Cytoplasm</location>
    </subcellularLocation>
</comment>
<comment type="similarity">
    <text evidence="2">Belongs to the transaldolase family. Type 3A subfamily.</text>
</comment>
<comment type="sequence caution" evidence="2">
    <conflict type="erroneous initiation">
        <sequence resource="EMBL-CDS" id="AAG55198"/>
    </conflict>
    <text>Extended N-terminus.</text>
</comment>
<protein>
    <recommendedName>
        <fullName>Fructose-6-phosphate aldolase 1</fullName>
        <ecNumber>4.1.2.-</ecNumber>
    </recommendedName>
</protein>
<name>FSAA_ECO57</name>
<feature type="chain" id="PRO_0000173645" description="Fructose-6-phosphate aldolase 1">
    <location>
        <begin position="1"/>
        <end position="220"/>
    </location>
</feature>
<feature type="active site" description="Schiff-base intermediate with substrate" evidence="1">
    <location>
        <position position="85"/>
    </location>
</feature>
<proteinExistence type="inferred from homology"/>
<accession>P58423</accession>
<reference key="1">
    <citation type="journal article" date="2001" name="Nature">
        <title>Genome sequence of enterohaemorrhagic Escherichia coli O157:H7.</title>
        <authorList>
            <person name="Perna N.T."/>
            <person name="Plunkett G. III"/>
            <person name="Burland V."/>
            <person name="Mau B."/>
            <person name="Glasner J.D."/>
            <person name="Rose D.J."/>
            <person name="Mayhew G.F."/>
            <person name="Evans P.S."/>
            <person name="Gregor J."/>
            <person name="Kirkpatrick H.A."/>
            <person name="Posfai G."/>
            <person name="Hackett J."/>
            <person name="Klink S."/>
            <person name="Boutin A."/>
            <person name="Shao Y."/>
            <person name="Miller L."/>
            <person name="Grotbeck E.J."/>
            <person name="Davis N.W."/>
            <person name="Lim A."/>
            <person name="Dimalanta E.T."/>
            <person name="Potamousis K."/>
            <person name="Apodaca J."/>
            <person name="Anantharaman T.S."/>
            <person name="Lin J."/>
            <person name="Yen G."/>
            <person name="Schwartz D.C."/>
            <person name="Welch R.A."/>
            <person name="Blattner F.R."/>
        </authorList>
    </citation>
    <scope>NUCLEOTIDE SEQUENCE [LARGE SCALE GENOMIC DNA]</scope>
    <source>
        <strain>O157:H7 / EDL933 / ATCC 700927 / EHEC</strain>
    </source>
</reference>
<reference key="2">
    <citation type="journal article" date="2001" name="DNA Res.">
        <title>Complete genome sequence of enterohemorrhagic Escherichia coli O157:H7 and genomic comparison with a laboratory strain K-12.</title>
        <authorList>
            <person name="Hayashi T."/>
            <person name="Makino K."/>
            <person name="Ohnishi M."/>
            <person name="Kurokawa K."/>
            <person name="Ishii K."/>
            <person name="Yokoyama K."/>
            <person name="Han C.-G."/>
            <person name="Ohtsubo E."/>
            <person name="Nakayama K."/>
            <person name="Murata T."/>
            <person name="Tanaka M."/>
            <person name="Tobe T."/>
            <person name="Iida T."/>
            <person name="Takami H."/>
            <person name="Honda T."/>
            <person name="Sasakawa C."/>
            <person name="Ogasawara N."/>
            <person name="Yasunaga T."/>
            <person name="Kuhara S."/>
            <person name="Shiba T."/>
            <person name="Hattori M."/>
            <person name="Shinagawa H."/>
        </authorList>
    </citation>
    <scope>NUCLEOTIDE SEQUENCE [LARGE SCALE GENOMIC DNA]</scope>
    <source>
        <strain>O157:H7 / Sakai / RIMD 0509952 / EHEC</strain>
    </source>
</reference>
<dbReference type="EC" id="4.1.2.-"/>
<dbReference type="EMBL" id="AE005174">
    <property type="protein sequence ID" value="AAG55198.1"/>
    <property type="status" value="ALT_INIT"/>
    <property type="molecule type" value="Genomic_DNA"/>
</dbReference>
<dbReference type="EMBL" id="BA000007">
    <property type="protein sequence ID" value="BAB34326.2"/>
    <property type="molecule type" value="Genomic_DNA"/>
</dbReference>
<dbReference type="PIR" id="B85592">
    <property type="entry name" value="B85592"/>
</dbReference>
<dbReference type="PIR" id="G90741">
    <property type="entry name" value="G90741"/>
</dbReference>
<dbReference type="RefSeq" id="NP_308930.3">
    <property type="nucleotide sequence ID" value="NC_002695.1"/>
</dbReference>
<dbReference type="RefSeq" id="WP_000424894.1">
    <property type="nucleotide sequence ID" value="NZ_VOAI01000006.1"/>
</dbReference>
<dbReference type="SMR" id="P58423"/>
<dbReference type="STRING" id="155864.Z1048"/>
<dbReference type="GeneID" id="917642"/>
<dbReference type="KEGG" id="ece:Z1048"/>
<dbReference type="KEGG" id="ecs:ECs_0903"/>
<dbReference type="PATRIC" id="fig|386585.9.peg.1018"/>
<dbReference type="eggNOG" id="COG0176">
    <property type="taxonomic scope" value="Bacteria"/>
</dbReference>
<dbReference type="HOGENOM" id="CLU_079764_2_0_6"/>
<dbReference type="OMA" id="VRHPMHV"/>
<dbReference type="Proteomes" id="UP000000558">
    <property type="component" value="Chromosome"/>
</dbReference>
<dbReference type="Proteomes" id="UP000002519">
    <property type="component" value="Chromosome"/>
</dbReference>
<dbReference type="GO" id="GO:0005737">
    <property type="term" value="C:cytoplasm"/>
    <property type="evidence" value="ECO:0007669"/>
    <property type="project" value="UniProtKB-SubCell"/>
</dbReference>
<dbReference type="GO" id="GO:0097023">
    <property type="term" value="F:fructose 6-phosphate aldolase activity"/>
    <property type="evidence" value="ECO:0007669"/>
    <property type="project" value="RHEA"/>
</dbReference>
<dbReference type="GO" id="GO:0006000">
    <property type="term" value="P:fructose metabolic process"/>
    <property type="evidence" value="ECO:0007669"/>
    <property type="project" value="UniProtKB-UniRule"/>
</dbReference>
<dbReference type="CDD" id="cd00956">
    <property type="entry name" value="Transaldolase_FSA"/>
    <property type="match status" value="1"/>
</dbReference>
<dbReference type="FunFam" id="3.20.20.70:FF:000018">
    <property type="entry name" value="Probable transaldolase"/>
    <property type="match status" value="1"/>
</dbReference>
<dbReference type="Gene3D" id="3.20.20.70">
    <property type="entry name" value="Aldolase class I"/>
    <property type="match status" value="1"/>
</dbReference>
<dbReference type="HAMAP" id="MF_00496">
    <property type="entry name" value="F6P_aldolase"/>
    <property type="match status" value="1"/>
</dbReference>
<dbReference type="InterPro" id="IPR013785">
    <property type="entry name" value="Aldolase_TIM"/>
</dbReference>
<dbReference type="InterPro" id="IPR023001">
    <property type="entry name" value="F6P_aldolase"/>
</dbReference>
<dbReference type="InterPro" id="IPR001585">
    <property type="entry name" value="TAL/FSA"/>
</dbReference>
<dbReference type="InterPro" id="IPR004731">
    <property type="entry name" value="Transaldolase_3B/F6P_aldolase"/>
</dbReference>
<dbReference type="InterPro" id="IPR018225">
    <property type="entry name" value="Transaldolase_AS"/>
</dbReference>
<dbReference type="InterPro" id="IPR033919">
    <property type="entry name" value="TSA/FSA_arc/bac"/>
</dbReference>
<dbReference type="NCBIfam" id="TIGR00875">
    <property type="entry name" value="fsa_talC_mipB"/>
    <property type="match status" value="1"/>
</dbReference>
<dbReference type="NCBIfam" id="NF009296">
    <property type="entry name" value="PRK12653.1"/>
    <property type="match status" value="1"/>
</dbReference>
<dbReference type="PANTHER" id="PTHR10683:SF40">
    <property type="entry name" value="FRUCTOSE-6-PHOSPHATE ALDOLASE 1-RELATED"/>
    <property type="match status" value="1"/>
</dbReference>
<dbReference type="PANTHER" id="PTHR10683">
    <property type="entry name" value="TRANSALDOLASE"/>
    <property type="match status" value="1"/>
</dbReference>
<dbReference type="Pfam" id="PF00923">
    <property type="entry name" value="TAL_FSA"/>
    <property type="match status" value="1"/>
</dbReference>
<dbReference type="SUPFAM" id="SSF51569">
    <property type="entry name" value="Aldolase"/>
    <property type="match status" value="1"/>
</dbReference>
<dbReference type="PROSITE" id="PS01054">
    <property type="entry name" value="TRANSALDOLASE_1"/>
    <property type="match status" value="1"/>
</dbReference>
<dbReference type="PROSITE" id="PS00958">
    <property type="entry name" value="TRANSALDOLASE_2"/>
    <property type="match status" value="1"/>
</dbReference>
<gene>
    <name type="primary">fsaA</name>
    <name type="synonym">fsa</name>
    <name type="synonym">mipB</name>
    <name type="ordered locus">Z1048</name>
    <name type="ordered locus">ECs0903</name>
</gene>
<organism>
    <name type="scientific">Escherichia coli O157:H7</name>
    <dbReference type="NCBI Taxonomy" id="83334"/>
    <lineage>
        <taxon>Bacteria</taxon>
        <taxon>Pseudomonadati</taxon>
        <taxon>Pseudomonadota</taxon>
        <taxon>Gammaproteobacteria</taxon>
        <taxon>Enterobacterales</taxon>
        <taxon>Enterobacteriaceae</taxon>
        <taxon>Escherichia</taxon>
    </lineage>
</organism>
<sequence>MELYLDTSDVVAVKALSRIFPLAGVTTNPSIIAAGKKPLEVVLPELHEAMGGQGRLFAQVMATTAEGMVNDARKLRSIIADIVVKVPVTTEGLAAIKMLKAEGIPTLGTAVYGAAQGLLSALAGAEYVAPYVNRIDAQGGSGIQTVTDLHQLLKMHAPRAKVLAASFKTPRQALDCLLAGCESITLPLDVAQQMISYPAVDAAVAKFEQDWQGAFGRTSI</sequence>